<reference key="1">
    <citation type="submission" date="2008-12" db="EMBL/GenBank/DDBJ databases">
        <title>Complete sequence of chromosome of Shewanella baltica OS223.</title>
        <authorList>
            <consortium name="US DOE Joint Genome Institute"/>
            <person name="Lucas S."/>
            <person name="Copeland A."/>
            <person name="Lapidus A."/>
            <person name="Glavina del Rio T."/>
            <person name="Dalin E."/>
            <person name="Tice H."/>
            <person name="Bruce D."/>
            <person name="Goodwin L."/>
            <person name="Pitluck S."/>
            <person name="Chertkov O."/>
            <person name="Meincke L."/>
            <person name="Brettin T."/>
            <person name="Detter J.C."/>
            <person name="Han C."/>
            <person name="Kuske C.R."/>
            <person name="Larimer F."/>
            <person name="Land M."/>
            <person name="Hauser L."/>
            <person name="Kyrpides N."/>
            <person name="Ovchinnikova G."/>
            <person name="Brettar I."/>
            <person name="Rodrigues J."/>
            <person name="Konstantinidis K."/>
            <person name="Tiedje J."/>
        </authorList>
    </citation>
    <scope>NUCLEOTIDE SEQUENCE [LARGE SCALE GENOMIC DNA]</scope>
    <source>
        <strain>OS223</strain>
    </source>
</reference>
<sequence length="345" mass="36733">MSTPTPLSYKDAGVDIDAGNALVSNIKAAVKRTRRPEVMGNLGGFGALCEIPTKYKQPVLVSGTDGVGTKLRLAIDYKKHDTVGIDLVAMCVNDLIVQGAEPLFFLDYYATGKLDVETATSVVNGIGEGCFQSGCALIGGETAEMPGMYEGEDYDLAGFCVGVVEKADIIDGSKVAAGDALIALASSGPHSNGYSLVRKVLEVSQADPQQDLNGKPLIEHLLEPTKIYVKSLLKLIAASDVHAMAHITGGGFWENIPRVLPDNLKAVIQGDSWQWPAVFSWLMENGNIAEYEMYRTFNCGVGMLVALPADKVDAALALLAAEGEQAWLIGAIADREGNEEQVEIL</sequence>
<comment type="catalytic activity">
    <reaction evidence="1">
        <text>2-formamido-N(1)-(5-O-phospho-beta-D-ribosyl)acetamidine + ATP = 5-amino-1-(5-phospho-beta-D-ribosyl)imidazole + ADP + phosphate + H(+)</text>
        <dbReference type="Rhea" id="RHEA:23032"/>
        <dbReference type="ChEBI" id="CHEBI:15378"/>
        <dbReference type="ChEBI" id="CHEBI:30616"/>
        <dbReference type="ChEBI" id="CHEBI:43474"/>
        <dbReference type="ChEBI" id="CHEBI:137981"/>
        <dbReference type="ChEBI" id="CHEBI:147287"/>
        <dbReference type="ChEBI" id="CHEBI:456216"/>
        <dbReference type="EC" id="6.3.3.1"/>
    </reaction>
</comment>
<comment type="pathway">
    <text evidence="1">Purine metabolism; IMP biosynthesis via de novo pathway; 5-amino-1-(5-phospho-D-ribosyl)imidazole from N(2)-formyl-N(1)-(5-phospho-D-ribosyl)glycinamide: step 2/2.</text>
</comment>
<comment type="subcellular location">
    <subcellularLocation>
        <location evidence="1">Cytoplasm</location>
    </subcellularLocation>
</comment>
<comment type="similarity">
    <text evidence="1">Belongs to the AIR synthase family.</text>
</comment>
<protein>
    <recommendedName>
        <fullName evidence="1">Phosphoribosylformylglycinamidine cyclo-ligase</fullName>
        <ecNumber evidence="1">6.3.3.1</ecNumber>
    </recommendedName>
    <alternativeName>
        <fullName evidence="1">AIR synthase</fullName>
    </alternativeName>
    <alternativeName>
        <fullName evidence="1">AIRS</fullName>
    </alternativeName>
    <alternativeName>
        <fullName evidence="1">Phosphoribosyl-aminoimidazole synthetase</fullName>
    </alternativeName>
</protein>
<proteinExistence type="inferred from homology"/>
<evidence type="ECO:0000255" key="1">
    <source>
        <dbReference type="HAMAP-Rule" id="MF_00741"/>
    </source>
</evidence>
<keyword id="KW-0067">ATP-binding</keyword>
<keyword id="KW-0963">Cytoplasm</keyword>
<keyword id="KW-0436">Ligase</keyword>
<keyword id="KW-0547">Nucleotide-binding</keyword>
<keyword id="KW-0658">Purine biosynthesis</keyword>
<dbReference type="EC" id="6.3.3.1" evidence="1"/>
<dbReference type="EMBL" id="CP001252">
    <property type="protein sequence ID" value="ACK47043.1"/>
    <property type="molecule type" value="Genomic_DNA"/>
</dbReference>
<dbReference type="RefSeq" id="WP_006081244.1">
    <property type="nucleotide sequence ID" value="NC_011663.1"/>
</dbReference>
<dbReference type="SMR" id="B8EAL4"/>
<dbReference type="GeneID" id="11771990"/>
<dbReference type="KEGG" id="sbp:Sbal223_2549"/>
<dbReference type="HOGENOM" id="CLU_047116_0_0_6"/>
<dbReference type="UniPathway" id="UPA00074">
    <property type="reaction ID" value="UER00129"/>
</dbReference>
<dbReference type="Proteomes" id="UP000002507">
    <property type="component" value="Chromosome"/>
</dbReference>
<dbReference type="GO" id="GO:0005829">
    <property type="term" value="C:cytosol"/>
    <property type="evidence" value="ECO:0007669"/>
    <property type="project" value="TreeGrafter"/>
</dbReference>
<dbReference type="GO" id="GO:0005524">
    <property type="term" value="F:ATP binding"/>
    <property type="evidence" value="ECO:0007669"/>
    <property type="project" value="UniProtKB-KW"/>
</dbReference>
<dbReference type="GO" id="GO:0004637">
    <property type="term" value="F:phosphoribosylamine-glycine ligase activity"/>
    <property type="evidence" value="ECO:0007669"/>
    <property type="project" value="TreeGrafter"/>
</dbReference>
<dbReference type="GO" id="GO:0004641">
    <property type="term" value="F:phosphoribosylformylglycinamidine cyclo-ligase activity"/>
    <property type="evidence" value="ECO:0007669"/>
    <property type="project" value="UniProtKB-UniRule"/>
</dbReference>
<dbReference type="GO" id="GO:0006189">
    <property type="term" value="P:'de novo' IMP biosynthetic process"/>
    <property type="evidence" value="ECO:0007669"/>
    <property type="project" value="UniProtKB-UniRule"/>
</dbReference>
<dbReference type="GO" id="GO:0046084">
    <property type="term" value="P:adenine biosynthetic process"/>
    <property type="evidence" value="ECO:0007669"/>
    <property type="project" value="TreeGrafter"/>
</dbReference>
<dbReference type="CDD" id="cd02196">
    <property type="entry name" value="PurM"/>
    <property type="match status" value="1"/>
</dbReference>
<dbReference type="FunFam" id="3.30.1330.10:FF:000001">
    <property type="entry name" value="Phosphoribosylformylglycinamidine cyclo-ligase"/>
    <property type="match status" value="1"/>
</dbReference>
<dbReference type="FunFam" id="3.90.650.10:FF:000001">
    <property type="entry name" value="Phosphoribosylformylglycinamidine cyclo-ligase"/>
    <property type="match status" value="1"/>
</dbReference>
<dbReference type="Gene3D" id="3.90.650.10">
    <property type="entry name" value="PurM-like C-terminal domain"/>
    <property type="match status" value="1"/>
</dbReference>
<dbReference type="Gene3D" id="3.30.1330.10">
    <property type="entry name" value="PurM-like, N-terminal domain"/>
    <property type="match status" value="1"/>
</dbReference>
<dbReference type="HAMAP" id="MF_00741">
    <property type="entry name" value="AIRS"/>
    <property type="match status" value="1"/>
</dbReference>
<dbReference type="InterPro" id="IPR010918">
    <property type="entry name" value="PurM-like_C_dom"/>
</dbReference>
<dbReference type="InterPro" id="IPR036676">
    <property type="entry name" value="PurM-like_C_sf"/>
</dbReference>
<dbReference type="InterPro" id="IPR016188">
    <property type="entry name" value="PurM-like_N"/>
</dbReference>
<dbReference type="InterPro" id="IPR036921">
    <property type="entry name" value="PurM-like_N_sf"/>
</dbReference>
<dbReference type="InterPro" id="IPR004733">
    <property type="entry name" value="PurM_cligase"/>
</dbReference>
<dbReference type="NCBIfam" id="TIGR00878">
    <property type="entry name" value="purM"/>
    <property type="match status" value="1"/>
</dbReference>
<dbReference type="PANTHER" id="PTHR10520:SF12">
    <property type="entry name" value="TRIFUNCTIONAL PURINE BIOSYNTHETIC PROTEIN ADENOSINE-3"/>
    <property type="match status" value="1"/>
</dbReference>
<dbReference type="PANTHER" id="PTHR10520">
    <property type="entry name" value="TRIFUNCTIONAL PURINE BIOSYNTHETIC PROTEIN ADENOSINE-3-RELATED"/>
    <property type="match status" value="1"/>
</dbReference>
<dbReference type="Pfam" id="PF00586">
    <property type="entry name" value="AIRS"/>
    <property type="match status" value="1"/>
</dbReference>
<dbReference type="Pfam" id="PF02769">
    <property type="entry name" value="AIRS_C"/>
    <property type="match status" value="1"/>
</dbReference>
<dbReference type="SUPFAM" id="SSF56042">
    <property type="entry name" value="PurM C-terminal domain-like"/>
    <property type="match status" value="1"/>
</dbReference>
<dbReference type="SUPFAM" id="SSF55326">
    <property type="entry name" value="PurM N-terminal domain-like"/>
    <property type="match status" value="1"/>
</dbReference>
<accession>B8EAL4</accession>
<gene>
    <name evidence="1" type="primary">purM</name>
    <name type="ordered locus">Sbal223_2549</name>
</gene>
<name>PUR5_SHEB2</name>
<organism>
    <name type="scientific">Shewanella baltica (strain OS223)</name>
    <dbReference type="NCBI Taxonomy" id="407976"/>
    <lineage>
        <taxon>Bacteria</taxon>
        <taxon>Pseudomonadati</taxon>
        <taxon>Pseudomonadota</taxon>
        <taxon>Gammaproteobacteria</taxon>
        <taxon>Alteromonadales</taxon>
        <taxon>Shewanellaceae</taxon>
        <taxon>Shewanella</taxon>
    </lineage>
</organism>
<feature type="chain" id="PRO_1000148294" description="Phosphoribosylformylglycinamidine cyclo-ligase">
    <location>
        <begin position="1"/>
        <end position="345"/>
    </location>
</feature>